<organism>
    <name type="scientific">Chlorobium phaeobacteroides (strain BS1)</name>
    <dbReference type="NCBI Taxonomy" id="331678"/>
    <lineage>
        <taxon>Bacteria</taxon>
        <taxon>Pseudomonadati</taxon>
        <taxon>Chlorobiota</taxon>
        <taxon>Chlorobiia</taxon>
        <taxon>Chlorobiales</taxon>
        <taxon>Chlorobiaceae</taxon>
        <taxon>Chlorobium/Pelodictyon group</taxon>
        <taxon>Chlorobium</taxon>
    </lineage>
</organism>
<comment type="function">
    <text evidence="1">Catalyzes the ATP-dependent phosphorylation of L-homoserine to L-homoserine phosphate.</text>
</comment>
<comment type="catalytic activity">
    <reaction evidence="1">
        <text>L-homoserine + ATP = O-phospho-L-homoserine + ADP + H(+)</text>
        <dbReference type="Rhea" id="RHEA:13985"/>
        <dbReference type="ChEBI" id="CHEBI:15378"/>
        <dbReference type="ChEBI" id="CHEBI:30616"/>
        <dbReference type="ChEBI" id="CHEBI:57476"/>
        <dbReference type="ChEBI" id="CHEBI:57590"/>
        <dbReference type="ChEBI" id="CHEBI:456216"/>
        <dbReference type="EC" id="2.7.1.39"/>
    </reaction>
</comment>
<comment type="pathway">
    <text evidence="1">Amino-acid biosynthesis; L-threonine biosynthesis; L-threonine from L-aspartate: step 4/5.</text>
</comment>
<comment type="subcellular location">
    <subcellularLocation>
        <location evidence="1">Cytoplasm</location>
    </subcellularLocation>
</comment>
<comment type="similarity">
    <text evidence="1">Belongs to the GHMP kinase family. Homoserine kinase subfamily.</text>
</comment>
<name>KHSE_CHLPB</name>
<sequence>MKTVTGFASATIGNVACGFDVLGFAITEPGDEVILTLREERSGELPVSITSITGDGGALPRNPKKNTSSFVVLKFLEYIRTNKGIDFEGHIELELKKNLPLSSGMGSSAASAAAALVAANELMGRPCNKMELVNFAIEGERVACGSAHADNAAPAMLGNFVLIRSYNPIDLITIPSPDNLYCTLVHPHIEVRTAYARSVLPRMISLKTATEQWGNVGALISGLLTSDYELIGRSLVDVIAEPKRAPLIPGFYDVKHAALEAGAIGCSIAGSGPSIFAFSSSPETASRVGEAMQTAFSTLKEKLQSDIWISPVCKQGAKVI</sequence>
<evidence type="ECO:0000255" key="1">
    <source>
        <dbReference type="HAMAP-Rule" id="MF_00384"/>
    </source>
</evidence>
<accession>B3EL38</accession>
<protein>
    <recommendedName>
        <fullName evidence="1">Homoserine kinase</fullName>
        <shortName evidence="1">HK</shortName>
        <shortName evidence="1">HSK</shortName>
        <ecNumber evidence="1">2.7.1.39</ecNumber>
    </recommendedName>
</protein>
<gene>
    <name evidence="1" type="primary">thrB</name>
    <name type="ordered locus">Cphamn1_0296</name>
</gene>
<dbReference type="EC" id="2.7.1.39" evidence="1"/>
<dbReference type="EMBL" id="CP001101">
    <property type="protein sequence ID" value="ACE03265.1"/>
    <property type="molecule type" value="Genomic_DNA"/>
</dbReference>
<dbReference type="SMR" id="B3EL38"/>
<dbReference type="STRING" id="331678.Cphamn1_0296"/>
<dbReference type="KEGG" id="cpb:Cphamn1_0296"/>
<dbReference type="eggNOG" id="COG0083">
    <property type="taxonomic scope" value="Bacteria"/>
</dbReference>
<dbReference type="HOGENOM" id="CLU_041243_1_1_10"/>
<dbReference type="OrthoDB" id="9769912at2"/>
<dbReference type="UniPathway" id="UPA00050">
    <property type="reaction ID" value="UER00064"/>
</dbReference>
<dbReference type="GO" id="GO:0005737">
    <property type="term" value="C:cytoplasm"/>
    <property type="evidence" value="ECO:0007669"/>
    <property type="project" value="UniProtKB-SubCell"/>
</dbReference>
<dbReference type="GO" id="GO:0005524">
    <property type="term" value="F:ATP binding"/>
    <property type="evidence" value="ECO:0007669"/>
    <property type="project" value="UniProtKB-UniRule"/>
</dbReference>
<dbReference type="GO" id="GO:0004413">
    <property type="term" value="F:homoserine kinase activity"/>
    <property type="evidence" value="ECO:0007669"/>
    <property type="project" value="UniProtKB-UniRule"/>
</dbReference>
<dbReference type="GO" id="GO:0009088">
    <property type="term" value="P:threonine biosynthetic process"/>
    <property type="evidence" value="ECO:0007669"/>
    <property type="project" value="UniProtKB-UniRule"/>
</dbReference>
<dbReference type="Gene3D" id="3.30.230.10">
    <property type="match status" value="1"/>
</dbReference>
<dbReference type="Gene3D" id="3.30.70.890">
    <property type="entry name" value="GHMP kinase, C-terminal domain"/>
    <property type="match status" value="1"/>
</dbReference>
<dbReference type="HAMAP" id="MF_00384">
    <property type="entry name" value="Homoser_kinase"/>
    <property type="match status" value="1"/>
</dbReference>
<dbReference type="InterPro" id="IPR013750">
    <property type="entry name" value="GHMP_kinase_C_dom"/>
</dbReference>
<dbReference type="InterPro" id="IPR036554">
    <property type="entry name" value="GHMP_kinase_C_sf"/>
</dbReference>
<dbReference type="InterPro" id="IPR006204">
    <property type="entry name" value="GHMP_kinase_N_dom"/>
</dbReference>
<dbReference type="InterPro" id="IPR006203">
    <property type="entry name" value="GHMP_knse_ATP-bd_CS"/>
</dbReference>
<dbReference type="InterPro" id="IPR000870">
    <property type="entry name" value="Homoserine_kinase"/>
</dbReference>
<dbReference type="InterPro" id="IPR020568">
    <property type="entry name" value="Ribosomal_Su5_D2-typ_SF"/>
</dbReference>
<dbReference type="InterPro" id="IPR014721">
    <property type="entry name" value="Ribsml_uS5_D2-typ_fold_subgr"/>
</dbReference>
<dbReference type="NCBIfam" id="NF002288">
    <property type="entry name" value="PRK01212.1-4"/>
    <property type="match status" value="1"/>
</dbReference>
<dbReference type="NCBIfam" id="TIGR00191">
    <property type="entry name" value="thrB"/>
    <property type="match status" value="1"/>
</dbReference>
<dbReference type="PANTHER" id="PTHR20861:SF1">
    <property type="entry name" value="HOMOSERINE KINASE"/>
    <property type="match status" value="1"/>
</dbReference>
<dbReference type="PANTHER" id="PTHR20861">
    <property type="entry name" value="HOMOSERINE/4-DIPHOSPHOCYTIDYL-2-C-METHYL-D-ERYTHRITOL KINASE"/>
    <property type="match status" value="1"/>
</dbReference>
<dbReference type="Pfam" id="PF08544">
    <property type="entry name" value="GHMP_kinases_C"/>
    <property type="match status" value="1"/>
</dbReference>
<dbReference type="Pfam" id="PF00288">
    <property type="entry name" value="GHMP_kinases_N"/>
    <property type="match status" value="1"/>
</dbReference>
<dbReference type="PIRSF" id="PIRSF000676">
    <property type="entry name" value="Homoser_kin"/>
    <property type="match status" value="1"/>
</dbReference>
<dbReference type="PRINTS" id="PR00958">
    <property type="entry name" value="HOMSERKINASE"/>
</dbReference>
<dbReference type="SUPFAM" id="SSF55060">
    <property type="entry name" value="GHMP Kinase, C-terminal domain"/>
    <property type="match status" value="1"/>
</dbReference>
<dbReference type="SUPFAM" id="SSF54211">
    <property type="entry name" value="Ribosomal protein S5 domain 2-like"/>
    <property type="match status" value="1"/>
</dbReference>
<dbReference type="PROSITE" id="PS00627">
    <property type="entry name" value="GHMP_KINASES_ATP"/>
    <property type="match status" value="1"/>
</dbReference>
<reference key="1">
    <citation type="submission" date="2008-06" db="EMBL/GenBank/DDBJ databases">
        <title>Complete sequence of Chlorobium phaeobacteroides BS1.</title>
        <authorList>
            <consortium name="US DOE Joint Genome Institute"/>
            <person name="Lucas S."/>
            <person name="Copeland A."/>
            <person name="Lapidus A."/>
            <person name="Glavina del Rio T."/>
            <person name="Dalin E."/>
            <person name="Tice H."/>
            <person name="Bruce D."/>
            <person name="Goodwin L."/>
            <person name="Pitluck S."/>
            <person name="Schmutz J."/>
            <person name="Larimer F."/>
            <person name="Land M."/>
            <person name="Hauser L."/>
            <person name="Kyrpides N."/>
            <person name="Ovchinnikova G."/>
            <person name="Li T."/>
            <person name="Liu Z."/>
            <person name="Zhao F."/>
            <person name="Overmann J."/>
            <person name="Bryant D.A."/>
            <person name="Richardson P."/>
        </authorList>
    </citation>
    <scope>NUCLEOTIDE SEQUENCE [LARGE SCALE GENOMIC DNA]</scope>
    <source>
        <strain>BS1</strain>
    </source>
</reference>
<feature type="chain" id="PRO_1000122408" description="Homoserine kinase">
    <location>
        <begin position="1"/>
        <end position="320"/>
    </location>
</feature>
<feature type="binding site" evidence="1">
    <location>
        <begin position="100"/>
        <end position="110"/>
    </location>
    <ligand>
        <name>ATP</name>
        <dbReference type="ChEBI" id="CHEBI:30616"/>
    </ligand>
</feature>
<keyword id="KW-0028">Amino-acid biosynthesis</keyword>
<keyword id="KW-0067">ATP-binding</keyword>
<keyword id="KW-0963">Cytoplasm</keyword>
<keyword id="KW-0418">Kinase</keyword>
<keyword id="KW-0547">Nucleotide-binding</keyword>
<keyword id="KW-0791">Threonine biosynthesis</keyword>
<keyword id="KW-0808">Transferase</keyword>
<proteinExistence type="inferred from homology"/>